<reference key="1">
    <citation type="journal article" date="1995" name="Science">
        <title>Whole-genome random sequencing and assembly of Haemophilus influenzae Rd.</title>
        <authorList>
            <person name="Fleischmann R.D."/>
            <person name="Adams M.D."/>
            <person name="White O."/>
            <person name="Clayton R.A."/>
            <person name="Kirkness E.F."/>
            <person name="Kerlavage A.R."/>
            <person name="Bult C.J."/>
            <person name="Tomb J.-F."/>
            <person name="Dougherty B.A."/>
            <person name="Merrick J.M."/>
            <person name="McKenney K."/>
            <person name="Sutton G.G."/>
            <person name="FitzHugh W."/>
            <person name="Fields C.A."/>
            <person name="Gocayne J.D."/>
            <person name="Scott J.D."/>
            <person name="Shirley R."/>
            <person name="Liu L.-I."/>
            <person name="Glodek A."/>
            <person name="Kelley J.M."/>
            <person name="Weidman J.F."/>
            <person name="Phillips C.A."/>
            <person name="Spriggs T."/>
            <person name="Hedblom E."/>
            <person name="Cotton M.D."/>
            <person name="Utterback T.R."/>
            <person name="Hanna M.C."/>
            <person name="Nguyen D.T."/>
            <person name="Saudek D.M."/>
            <person name="Brandon R.C."/>
            <person name="Fine L.D."/>
            <person name="Fritchman J.L."/>
            <person name="Fuhrmann J.L."/>
            <person name="Geoghagen N.S.M."/>
            <person name="Gnehm C.L."/>
            <person name="McDonald L.A."/>
            <person name="Small K.V."/>
            <person name="Fraser C.M."/>
            <person name="Smith H.O."/>
            <person name="Venter J.C."/>
        </authorList>
    </citation>
    <scope>NUCLEOTIDE SEQUENCE [LARGE SCALE GENOMIC DNA]</scope>
    <source>
        <strain>ATCC 51907 / DSM 11121 / KW20 / Rd</strain>
    </source>
</reference>
<name>Y1462_HAEIN</name>
<accession>P45217</accession>
<keyword id="KW-1185">Reference proteome</keyword>
<sequence>MFKMKNITLALLMSGALVGCANIGDSYQASLEDYKQYEEITKQYNVKENWWSLYDDAQLNRVVGQALINNKDLAKAAVAVNRALYSANLVGANLVPAFNGSTSSAAQRRVDISTNSAISHKGSLNVSYTLDLWQRLANTVDAAEWSHKATAEDMESARLSLINSVVTTYYQIAYLNDAISTTNETIKYYTDIGNIMQTRLVQGVADAASVDQAQQAILTARNNKLNFETQRKTAEQTLRNLLNLKPNEALNITFPHIMNVKTAGVNLNVPVSVIANRPDVKAAQFRLSSAFKNAKATQKSWFPEVNLGASLSSTASTVGTALHNPVAAGTVGISLPFLNWNTVKWNVKISEADYETARLNYEQRITTALNNVDTNYFAFTQAQSTLSNLQQTHSYNQRITQYYRNRYNAGVSELREWLVAANTEKSSQLAILNAKYQVLQSENAVYSSMAGYYL</sequence>
<proteinExistence type="inferred from homology"/>
<protein>
    <recommendedName>
        <fullName>Uncharacterized protein HI_1462</fullName>
    </recommendedName>
</protein>
<comment type="similarity">
    <text evidence="1">Belongs to the outer membrane factor (OMF) (TC 1.B.17) family.</text>
</comment>
<organism>
    <name type="scientific">Haemophilus influenzae (strain ATCC 51907 / DSM 11121 / KW20 / Rd)</name>
    <dbReference type="NCBI Taxonomy" id="71421"/>
    <lineage>
        <taxon>Bacteria</taxon>
        <taxon>Pseudomonadati</taxon>
        <taxon>Pseudomonadota</taxon>
        <taxon>Gammaproteobacteria</taxon>
        <taxon>Pasteurellales</taxon>
        <taxon>Pasteurellaceae</taxon>
        <taxon>Haemophilus</taxon>
    </lineage>
</organism>
<feature type="chain" id="PRO_0000078062" description="Uncharacterized protein HI_1462">
    <location>
        <begin position="1"/>
        <end position="454"/>
    </location>
</feature>
<evidence type="ECO:0000305" key="1"/>
<dbReference type="EMBL" id="L42023">
    <property type="protein sequence ID" value="AAC23108.1"/>
    <property type="molecule type" value="Genomic_DNA"/>
</dbReference>
<dbReference type="PIR" id="I64124">
    <property type="entry name" value="I64124"/>
</dbReference>
<dbReference type="RefSeq" id="NP_439611.1">
    <property type="nucleotide sequence ID" value="NC_000907.1"/>
</dbReference>
<dbReference type="SMR" id="P45217"/>
<dbReference type="STRING" id="71421.HI_1462"/>
<dbReference type="TCDB" id="1.B.17.3.7">
    <property type="family name" value="the outer membrane factor (omf) family"/>
</dbReference>
<dbReference type="EnsemblBacteria" id="AAC23108">
    <property type="protein sequence ID" value="AAC23108"/>
    <property type="gene ID" value="HI_1462"/>
</dbReference>
<dbReference type="KEGG" id="hin:HI_1462"/>
<dbReference type="PATRIC" id="fig|71421.8.peg.1526"/>
<dbReference type="eggNOG" id="COG1538">
    <property type="taxonomic scope" value="Bacteria"/>
</dbReference>
<dbReference type="HOGENOM" id="CLU_012817_13_1_6"/>
<dbReference type="OrthoDB" id="9770517at2"/>
<dbReference type="PhylomeDB" id="P45217"/>
<dbReference type="BioCyc" id="HINF71421:G1GJ1-1486-MONOMER"/>
<dbReference type="Proteomes" id="UP000000579">
    <property type="component" value="Chromosome"/>
</dbReference>
<dbReference type="GO" id="GO:0016020">
    <property type="term" value="C:membrane"/>
    <property type="evidence" value="ECO:0000318"/>
    <property type="project" value="GO_Central"/>
</dbReference>
<dbReference type="GO" id="GO:0015562">
    <property type="term" value="F:efflux transmembrane transporter activity"/>
    <property type="evidence" value="ECO:0007669"/>
    <property type="project" value="InterPro"/>
</dbReference>
<dbReference type="GO" id="GO:0022857">
    <property type="term" value="F:transmembrane transporter activity"/>
    <property type="evidence" value="ECO:0000318"/>
    <property type="project" value="GO_Central"/>
</dbReference>
<dbReference type="GO" id="GO:0055085">
    <property type="term" value="P:transmembrane transport"/>
    <property type="evidence" value="ECO:0000318"/>
    <property type="project" value="GO_Central"/>
</dbReference>
<dbReference type="Gene3D" id="1.20.1600.10">
    <property type="entry name" value="Outer membrane efflux proteins (OEP)"/>
    <property type="match status" value="1"/>
</dbReference>
<dbReference type="Gene3D" id="2.20.200.10">
    <property type="entry name" value="Outer membrane efflux proteins (OEP)"/>
    <property type="match status" value="1"/>
</dbReference>
<dbReference type="InterPro" id="IPR050737">
    <property type="entry name" value="OMF"/>
</dbReference>
<dbReference type="InterPro" id="IPR003423">
    <property type="entry name" value="OMP_efflux"/>
</dbReference>
<dbReference type="InterPro" id="IPR010131">
    <property type="entry name" value="RND_efflux_OM_lipoprot_NodT"/>
</dbReference>
<dbReference type="NCBIfam" id="TIGR01845">
    <property type="entry name" value="outer_NodT"/>
    <property type="match status" value="1"/>
</dbReference>
<dbReference type="NCBIfam" id="NF047721">
    <property type="entry name" value="ToxDrgExpTdeA"/>
    <property type="match status" value="1"/>
</dbReference>
<dbReference type="PANTHER" id="PTHR30203:SF32">
    <property type="entry name" value="CATION EFFLUX SYSTEM PROTEIN CUSC"/>
    <property type="match status" value="1"/>
</dbReference>
<dbReference type="PANTHER" id="PTHR30203">
    <property type="entry name" value="OUTER MEMBRANE CATION EFFLUX PROTEIN"/>
    <property type="match status" value="1"/>
</dbReference>
<dbReference type="Pfam" id="PF02321">
    <property type="entry name" value="OEP"/>
    <property type="match status" value="2"/>
</dbReference>
<dbReference type="SUPFAM" id="SSF56954">
    <property type="entry name" value="Outer membrane efflux proteins (OEP)"/>
    <property type="match status" value="1"/>
</dbReference>
<dbReference type="PROSITE" id="PS51257">
    <property type="entry name" value="PROKAR_LIPOPROTEIN"/>
    <property type="match status" value="1"/>
</dbReference>
<gene>
    <name type="ordered locus">HI_1462</name>
</gene>